<sequence length="89" mass="10399">MVKLRLKRCGKKQRAVYRIVAIDVRSRREGRDLRKVGFYDPIKNQTYLNIPVILYFLERGAQPTGTVQDISKRAGVFMELSSNQQTKFH</sequence>
<geneLocation type="chloroplast"/>
<protein>
    <recommendedName>
        <fullName evidence="1">Small ribosomal subunit protein bS16c</fullName>
    </recommendedName>
    <alternativeName>
        <fullName evidence="2">30S ribosomal protein S16, chloroplastic</fullName>
    </alternativeName>
</protein>
<organism>
    <name type="scientific">Glycine max</name>
    <name type="common">Soybean</name>
    <name type="synonym">Glycine hispida</name>
    <dbReference type="NCBI Taxonomy" id="3847"/>
    <lineage>
        <taxon>Eukaryota</taxon>
        <taxon>Viridiplantae</taxon>
        <taxon>Streptophyta</taxon>
        <taxon>Embryophyta</taxon>
        <taxon>Tracheophyta</taxon>
        <taxon>Spermatophyta</taxon>
        <taxon>Magnoliopsida</taxon>
        <taxon>eudicotyledons</taxon>
        <taxon>Gunneridae</taxon>
        <taxon>Pentapetalae</taxon>
        <taxon>rosids</taxon>
        <taxon>fabids</taxon>
        <taxon>Fabales</taxon>
        <taxon>Fabaceae</taxon>
        <taxon>Papilionoideae</taxon>
        <taxon>50 kb inversion clade</taxon>
        <taxon>NPAAA clade</taxon>
        <taxon>indigoferoid/millettioid clade</taxon>
        <taxon>Phaseoleae</taxon>
        <taxon>Glycine</taxon>
        <taxon>Glycine subgen. Soja</taxon>
    </lineage>
</organism>
<comment type="subcellular location">
    <subcellularLocation>
        <location>Plastid</location>
        <location>Chloroplast</location>
    </subcellularLocation>
</comment>
<comment type="similarity">
    <text evidence="1">Belongs to the bacterial ribosomal protein bS16 family.</text>
</comment>
<name>RR16_SOYBN</name>
<gene>
    <name evidence="1" type="primary">rps16</name>
</gene>
<dbReference type="EMBL" id="DQ317523">
    <property type="protein sequence ID" value="ABC25133.1"/>
    <property type="molecule type" value="Genomic_DNA"/>
</dbReference>
<dbReference type="RefSeq" id="YP_538773.1">
    <property type="nucleotide sequence ID" value="NC_007942.1"/>
</dbReference>
<dbReference type="SMR" id="Q2PMS5"/>
<dbReference type="FunCoup" id="Q2PMS5">
    <property type="interactions" value="11"/>
</dbReference>
<dbReference type="STRING" id="3847.Q2PMS5"/>
<dbReference type="GeneID" id="3989305"/>
<dbReference type="KEGG" id="gmx:3989305"/>
<dbReference type="InParanoid" id="Q2PMS5"/>
<dbReference type="Proteomes" id="UP000008827">
    <property type="component" value="Chloroplast"/>
</dbReference>
<dbReference type="GO" id="GO:0009507">
    <property type="term" value="C:chloroplast"/>
    <property type="evidence" value="ECO:0007669"/>
    <property type="project" value="UniProtKB-SubCell"/>
</dbReference>
<dbReference type="GO" id="GO:0015935">
    <property type="term" value="C:small ribosomal subunit"/>
    <property type="evidence" value="ECO:0000318"/>
    <property type="project" value="GO_Central"/>
</dbReference>
<dbReference type="GO" id="GO:0003735">
    <property type="term" value="F:structural constituent of ribosome"/>
    <property type="evidence" value="ECO:0000318"/>
    <property type="project" value="GO_Central"/>
</dbReference>
<dbReference type="GO" id="GO:0006412">
    <property type="term" value="P:translation"/>
    <property type="evidence" value="ECO:0007669"/>
    <property type="project" value="UniProtKB-UniRule"/>
</dbReference>
<dbReference type="FunFam" id="3.30.1320.10:FF:000003">
    <property type="entry name" value="30S ribosomal protein S16, chloroplastic"/>
    <property type="match status" value="1"/>
</dbReference>
<dbReference type="Gene3D" id="3.30.1320.10">
    <property type="match status" value="1"/>
</dbReference>
<dbReference type="HAMAP" id="MF_00385">
    <property type="entry name" value="Ribosomal_bS16"/>
    <property type="match status" value="1"/>
</dbReference>
<dbReference type="InterPro" id="IPR000307">
    <property type="entry name" value="Ribosomal_bS16"/>
</dbReference>
<dbReference type="InterPro" id="IPR020592">
    <property type="entry name" value="Ribosomal_bS16_CS"/>
</dbReference>
<dbReference type="InterPro" id="IPR023803">
    <property type="entry name" value="Ribosomal_bS16_dom_sf"/>
</dbReference>
<dbReference type="NCBIfam" id="TIGR00002">
    <property type="entry name" value="S16"/>
    <property type="match status" value="1"/>
</dbReference>
<dbReference type="PANTHER" id="PTHR12919">
    <property type="entry name" value="30S RIBOSOMAL PROTEIN S16"/>
    <property type="match status" value="1"/>
</dbReference>
<dbReference type="PANTHER" id="PTHR12919:SF20">
    <property type="entry name" value="SMALL RIBOSOMAL SUBUNIT PROTEIN BS16M"/>
    <property type="match status" value="1"/>
</dbReference>
<dbReference type="Pfam" id="PF00886">
    <property type="entry name" value="Ribosomal_S16"/>
    <property type="match status" value="1"/>
</dbReference>
<dbReference type="SUPFAM" id="SSF54565">
    <property type="entry name" value="Ribosomal protein S16"/>
    <property type="match status" value="1"/>
</dbReference>
<dbReference type="PROSITE" id="PS00732">
    <property type="entry name" value="RIBOSOMAL_S16"/>
    <property type="match status" value="1"/>
</dbReference>
<feature type="chain" id="PRO_0000276946" description="Small ribosomal subunit protein bS16c">
    <location>
        <begin position="1"/>
        <end position="89"/>
    </location>
</feature>
<reference key="1">
    <citation type="journal article" date="2005" name="Plant Mol. Biol.">
        <title>Complete chloroplast genome sequence of Glycine max and comparative analyses with other legume genomes.</title>
        <authorList>
            <person name="Saski C."/>
            <person name="Lee S.-B."/>
            <person name="Daniell H."/>
            <person name="Wood T.C."/>
            <person name="Tomkins J."/>
            <person name="Kim H.-G."/>
            <person name="Jansen R.K."/>
        </authorList>
    </citation>
    <scope>NUCLEOTIDE SEQUENCE [LARGE SCALE GENOMIC DNA]</scope>
    <source>
        <strain>cv. PI 437654</strain>
    </source>
</reference>
<evidence type="ECO:0000255" key="1">
    <source>
        <dbReference type="HAMAP-Rule" id="MF_00385"/>
    </source>
</evidence>
<evidence type="ECO:0000305" key="2"/>
<accession>Q2PMS5</accession>
<proteinExistence type="inferred from homology"/>
<keyword id="KW-0150">Chloroplast</keyword>
<keyword id="KW-0934">Plastid</keyword>
<keyword id="KW-1185">Reference proteome</keyword>
<keyword id="KW-0687">Ribonucleoprotein</keyword>
<keyword id="KW-0689">Ribosomal protein</keyword>